<name>Y2946_DICDI</name>
<organism>
    <name type="scientific">Dictyostelium discoideum</name>
    <name type="common">Social amoeba</name>
    <dbReference type="NCBI Taxonomy" id="44689"/>
    <lineage>
        <taxon>Eukaryota</taxon>
        <taxon>Amoebozoa</taxon>
        <taxon>Evosea</taxon>
        <taxon>Eumycetozoa</taxon>
        <taxon>Dictyostelia</taxon>
        <taxon>Dictyosteliales</taxon>
        <taxon>Dictyosteliaceae</taxon>
        <taxon>Dictyostelium</taxon>
    </lineage>
</organism>
<reference key="1">
    <citation type="journal article" date="2005" name="Nature">
        <title>The genome of the social amoeba Dictyostelium discoideum.</title>
        <authorList>
            <person name="Eichinger L."/>
            <person name="Pachebat J.A."/>
            <person name="Gloeckner G."/>
            <person name="Rajandream M.A."/>
            <person name="Sucgang R."/>
            <person name="Berriman M."/>
            <person name="Song J."/>
            <person name="Olsen R."/>
            <person name="Szafranski K."/>
            <person name="Xu Q."/>
            <person name="Tunggal B."/>
            <person name="Kummerfeld S."/>
            <person name="Madera M."/>
            <person name="Konfortov B.A."/>
            <person name="Rivero F."/>
            <person name="Bankier A.T."/>
            <person name="Lehmann R."/>
            <person name="Hamlin N."/>
            <person name="Davies R."/>
            <person name="Gaudet P."/>
            <person name="Fey P."/>
            <person name="Pilcher K."/>
            <person name="Chen G."/>
            <person name="Saunders D."/>
            <person name="Sodergren E.J."/>
            <person name="Davis P."/>
            <person name="Kerhornou A."/>
            <person name="Nie X."/>
            <person name="Hall N."/>
            <person name="Anjard C."/>
            <person name="Hemphill L."/>
            <person name="Bason N."/>
            <person name="Farbrother P."/>
            <person name="Desany B."/>
            <person name="Just E."/>
            <person name="Morio T."/>
            <person name="Rost R."/>
            <person name="Churcher C.M."/>
            <person name="Cooper J."/>
            <person name="Haydock S."/>
            <person name="van Driessche N."/>
            <person name="Cronin A."/>
            <person name="Goodhead I."/>
            <person name="Muzny D.M."/>
            <person name="Mourier T."/>
            <person name="Pain A."/>
            <person name="Lu M."/>
            <person name="Harper D."/>
            <person name="Lindsay R."/>
            <person name="Hauser H."/>
            <person name="James K.D."/>
            <person name="Quiles M."/>
            <person name="Madan Babu M."/>
            <person name="Saito T."/>
            <person name="Buchrieser C."/>
            <person name="Wardroper A."/>
            <person name="Felder M."/>
            <person name="Thangavelu M."/>
            <person name="Johnson D."/>
            <person name="Knights A."/>
            <person name="Loulseged H."/>
            <person name="Mungall K.L."/>
            <person name="Oliver K."/>
            <person name="Price C."/>
            <person name="Quail M.A."/>
            <person name="Urushihara H."/>
            <person name="Hernandez J."/>
            <person name="Rabbinowitsch E."/>
            <person name="Steffen D."/>
            <person name="Sanders M."/>
            <person name="Ma J."/>
            <person name="Kohara Y."/>
            <person name="Sharp S."/>
            <person name="Simmonds M.N."/>
            <person name="Spiegler S."/>
            <person name="Tivey A."/>
            <person name="Sugano S."/>
            <person name="White B."/>
            <person name="Walker D."/>
            <person name="Woodward J.R."/>
            <person name="Winckler T."/>
            <person name="Tanaka Y."/>
            <person name="Shaulsky G."/>
            <person name="Schleicher M."/>
            <person name="Weinstock G.M."/>
            <person name="Rosenthal A."/>
            <person name="Cox E.C."/>
            <person name="Chisholm R.L."/>
            <person name="Gibbs R.A."/>
            <person name="Loomis W.F."/>
            <person name="Platzer M."/>
            <person name="Kay R.R."/>
            <person name="Williams J.G."/>
            <person name="Dear P.H."/>
            <person name="Noegel A.A."/>
            <person name="Barrell B.G."/>
            <person name="Kuspa A."/>
        </authorList>
    </citation>
    <scope>NUCLEOTIDE SEQUENCE [LARGE SCALE GENOMIC DNA]</scope>
    <source>
        <strain>AX4</strain>
    </source>
</reference>
<feature type="chain" id="PRO_0000377438" description="Uncharacterized transmembrane protein DDB_G0294619">
    <location>
        <begin position="1"/>
        <end position="465"/>
    </location>
</feature>
<feature type="transmembrane region" description="Helical" evidence="1">
    <location>
        <begin position="56"/>
        <end position="76"/>
    </location>
</feature>
<feature type="transmembrane region" description="Helical" evidence="1">
    <location>
        <begin position="273"/>
        <end position="293"/>
    </location>
</feature>
<feature type="region of interest" description="Disordered" evidence="2">
    <location>
        <begin position="177"/>
        <end position="198"/>
    </location>
</feature>
<feature type="region of interest" description="Disordered" evidence="2">
    <location>
        <begin position="411"/>
        <end position="449"/>
    </location>
</feature>
<protein>
    <recommendedName>
        <fullName>Uncharacterized transmembrane protein DDB_G0294619</fullName>
    </recommendedName>
</protein>
<dbReference type="EMBL" id="AAFI02000035">
    <property type="protein sequence ID" value="EDR41075.2"/>
    <property type="molecule type" value="Genomic_DNA"/>
</dbReference>
<dbReference type="RefSeq" id="XP_001732997.2">
    <property type="nucleotide sequence ID" value="XM_001732945.2"/>
</dbReference>
<dbReference type="FunCoup" id="B0G134">
    <property type="interactions" value="877"/>
</dbReference>
<dbReference type="PaxDb" id="44689-DDB0304696"/>
<dbReference type="EnsemblProtists" id="EDR41075">
    <property type="protein sequence ID" value="EDR41075"/>
    <property type="gene ID" value="DDB_G0294619"/>
</dbReference>
<dbReference type="GeneID" id="8622338"/>
<dbReference type="KEGG" id="ddi:DDB_G0294619"/>
<dbReference type="dictyBase" id="DDB_G0294619"/>
<dbReference type="VEuPathDB" id="AmoebaDB:DDB_G0294619"/>
<dbReference type="eggNOG" id="ENOG502RI29">
    <property type="taxonomic scope" value="Eukaryota"/>
</dbReference>
<dbReference type="HOGENOM" id="CLU_588541_0_0_1"/>
<dbReference type="InParanoid" id="B0G134"/>
<dbReference type="OMA" id="VENCIAP"/>
<dbReference type="PRO" id="PR:B0G134"/>
<dbReference type="Proteomes" id="UP000002195">
    <property type="component" value="Chromosome 3"/>
</dbReference>
<dbReference type="GO" id="GO:0016020">
    <property type="term" value="C:membrane"/>
    <property type="evidence" value="ECO:0007669"/>
    <property type="project" value="UniProtKB-SubCell"/>
</dbReference>
<comment type="subcellular location">
    <subcellularLocation>
        <location evidence="3">Membrane</location>
        <topology evidence="3">Multi-pass membrane protein</topology>
    </subcellularLocation>
</comment>
<accession>B0G134</accession>
<gene>
    <name type="ORF">DDB_G0294619</name>
</gene>
<evidence type="ECO:0000255" key="1"/>
<evidence type="ECO:0000256" key="2">
    <source>
        <dbReference type="SAM" id="MobiDB-lite"/>
    </source>
</evidence>
<evidence type="ECO:0000305" key="3"/>
<proteinExistence type="predicted"/>
<keyword id="KW-0472">Membrane</keyword>
<keyword id="KW-1185">Reference proteome</keyword>
<keyword id="KW-0812">Transmembrane</keyword>
<keyword id="KW-1133">Transmembrane helix</keyword>
<sequence>MVRQIKILPKHSIGHNFSGFDKSYPEELYSSLPIIEYTQIIDYINLKTQRDYKSYILYMIIFAIFGLLPFLIALIFELFRSSLYKNRFERDFDNCLKQINELIKCRNVTFSFKFTSKIRKMQKLELIISYQDEQPKKEIVGDFIVSPEGRNILVLPPAPLDLINFDQLYLSSSQSNKFNKSKKSNKINDKTPILNNNNNNNNNNNIINYCKTKINYNNSERKTNGLKDDNFYGFKDTNYDKDLYNFMLESEYQSMIREFNTVLVRKIDIKKQLIFLLVSTILLIALIGFILIIPAAILYSKKRSHYYTHLYNDLNIMVHKYSSIYNSRGITISYCFENSDDFNNDSSPLINILIIYPKAPKGSPILTNFTNNTHQWILVPTSPNAIAPYFTILNNMAYNNNNSIIENNFNNNYNNSNNNNNSNNSNSNNNNNNNNNNNNYNNNNYNNNNNQVQVYQTEQTLNYNI</sequence>